<feature type="chain" id="PRO_0000415238" description="Uncharacterized shell protein 26">
    <location>
        <begin position="1"/>
        <end position="173"/>
    </location>
</feature>
<feature type="region of interest" description="Disordered" evidence="1">
    <location>
        <begin position="1"/>
        <end position="23"/>
    </location>
</feature>
<feature type="non-terminal residue" evidence="4">
    <location>
        <position position="1"/>
    </location>
</feature>
<protein>
    <recommendedName>
        <fullName>Uncharacterized shell protein 26</fullName>
    </recommendedName>
    <alternativeName>
        <fullName>BMSP-like protein</fullName>
    </alternativeName>
</protein>
<organism>
    <name type="scientific">Lottia gigantea</name>
    <name type="common">Giant owl limpet</name>
    <dbReference type="NCBI Taxonomy" id="225164"/>
    <lineage>
        <taxon>Eukaryota</taxon>
        <taxon>Metazoa</taxon>
        <taxon>Spiralia</taxon>
        <taxon>Lophotrochozoa</taxon>
        <taxon>Mollusca</taxon>
        <taxon>Gastropoda</taxon>
        <taxon>Patellogastropoda</taxon>
        <taxon>Lottioidea</taxon>
        <taxon>Lottiidae</taxon>
        <taxon>Lottia</taxon>
    </lineage>
</organism>
<comment type="subcellular location">
    <subcellularLocation>
        <location evidence="2">Secreted</location>
    </subcellularLocation>
</comment>
<comment type="tissue specificity">
    <text evidence="2">Component of the acid-insoluble and acid-soluble organic matrix of calcified layers of the shell (at protein level).</text>
</comment>
<keyword id="KW-0903">Direct protein sequencing</keyword>
<keyword id="KW-0964">Secreted</keyword>
<accession>B3A0P4</accession>
<sequence length="173" mass="18713">ELTSVAGSGRVDSTPLGSRGVTDLERGSFDVTVDKTNIGPLDYNLRAIKMRSKRSLSRPQAIISNCNGVNGEGPSIMVSGGPDYVTFSIKTSNTVRPAQLTIPARPGYNDVSMIYDGQNLKAKVNDIARSIPLTGKIEMRQAGLLFGACNGYANFRGEVDDFEMYECIPPFWG</sequence>
<name>USP26_LOTGI</name>
<evidence type="ECO:0000256" key="1">
    <source>
        <dbReference type="SAM" id="MobiDB-lite"/>
    </source>
</evidence>
<evidence type="ECO:0000269" key="2">
    <source>
    </source>
</evidence>
<evidence type="ECO:0000269" key="3">
    <source ref="1"/>
</evidence>
<evidence type="ECO:0000305" key="4"/>
<reference evidence="4" key="1">
    <citation type="submission" date="2007-12" db="EMBL/GenBank/DDBJ databases">
        <title>DOE Joint Genome Institute Lottia gigantea EST project.</title>
        <authorList>
            <person name="Richardson P."/>
            <person name="Lucas S."/>
            <person name="Rokhsar D."/>
            <person name="Wang M."/>
            <person name="Lindquist E.A."/>
        </authorList>
    </citation>
    <scope>NUCLEOTIDE SEQUENCE [LARGE SCALE MRNA]</scope>
    <scope>IDENTIFICATION</scope>
    <source>
        <tissue evidence="3">Larva</tissue>
    </source>
</reference>
<reference key="2">
    <citation type="journal article" date="2013" name="FEBS J.">
        <title>The shell-forming proteome of Lottia gigantea reveals both deep conservations and lineage-specific novelties.</title>
        <authorList>
            <person name="Marie B."/>
            <person name="Jackson D.J."/>
            <person name="Ramos-Silva P."/>
            <person name="Zanella-Cleon I."/>
            <person name="Guichard N."/>
            <person name="Marin F."/>
        </authorList>
    </citation>
    <scope>PROTEIN SEQUENCE OF 11-46 AND 122-140</scope>
    <scope>SUBCELLULAR LOCATION</scope>
    <scope>TISSUE SPECIFICITY</scope>
    <source>
        <tissue>Shell</tissue>
    </source>
</reference>
<proteinExistence type="evidence at protein level"/>
<dbReference type="EMBL" id="FC775497">
    <property type="status" value="NOT_ANNOTATED_CDS"/>
    <property type="molecule type" value="mRNA"/>
</dbReference>
<dbReference type="SMR" id="B3A0P4"/>
<dbReference type="GO" id="GO:0005576">
    <property type="term" value="C:extracellular region"/>
    <property type="evidence" value="ECO:0007669"/>
    <property type="project" value="UniProtKB-SubCell"/>
</dbReference>